<comment type="function">
    <text evidence="3">Voltage-gated potassium-selective channel opened by hyperpolarization.</text>
</comment>
<comment type="subunit">
    <text evidence="4">Homotetramer.</text>
</comment>
<comment type="subcellular location">
    <subcellularLocation>
        <location>Cell membrane</location>
        <topology>Multi-pass membrane protein</topology>
    </subcellularLocation>
</comment>
<comment type="domain">
    <text>The segment S4 is probably the voltage-sensor and is characterized by a series of positively charged amino acids.</text>
</comment>
<comment type="miscellaneous">
    <text>Inhibited by barium.</text>
</comment>
<comment type="similarity">
    <text evidence="4">Belongs to the potassium channel family.</text>
</comment>
<keyword id="KW-1003">Cell membrane</keyword>
<keyword id="KW-0407">Ion channel</keyword>
<keyword id="KW-0406">Ion transport</keyword>
<keyword id="KW-0472">Membrane</keyword>
<keyword id="KW-0630">Potassium</keyword>
<keyword id="KW-0631">Potassium channel</keyword>
<keyword id="KW-0633">Potassium transport</keyword>
<keyword id="KW-1185">Reference proteome</keyword>
<keyword id="KW-0812">Transmembrane</keyword>
<keyword id="KW-1133">Transmembrane helix</keyword>
<keyword id="KW-0813">Transport</keyword>
<keyword id="KW-0851">Voltage-gated channel</keyword>
<proteinExistence type="evidence at protein level"/>
<feature type="chain" id="PRO_0000054098" description="Hyperpolarization-activated voltage-gated potassium channel">
    <location>
        <begin position="1"/>
        <end position="209"/>
    </location>
</feature>
<feature type="topological domain" description="Cytoplasmic" evidence="2">
    <location>
        <begin position="1"/>
        <end position="10"/>
    </location>
</feature>
<feature type="transmembrane region" description="Helical; Name=Segment S1" evidence="2">
    <location>
        <begin position="11"/>
        <end position="31"/>
    </location>
</feature>
<feature type="topological domain" description="Extracellular" evidence="2">
    <location>
        <begin position="32"/>
        <end position="38"/>
    </location>
</feature>
<feature type="transmembrane region" description="Helical; Name=Segment S2" evidence="2">
    <location>
        <begin position="39"/>
        <end position="59"/>
    </location>
</feature>
<feature type="topological domain" description="Cytoplasmic" evidence="2">
    <location>
        <begin position="60"/>
        <end position="71"/>
    </location>
</feature>
<feature type="transmembrane region" description="Helical; Name=Segment S3" evidence="2">
    <location>
        <begin position="72"/>
        <end position="92"/>
    </location>
</feature>
<feature type="topological domain" description="Extracellular" evidence="2">
    <location>
        <begin position="93"/>
        <end position="96"/>
    </location>
</feature>
<feature type="transmembrane region" description="Helical; Voltage-sensor; Name=Segment S4" evidence="2">
    <location>
        <begin position="97"/>
        <end position="117"/>
    </location>
</feature>
<feature type="topological domain" description="Cytoplasmic" evidence="2">
    <location>
        <begin position="118"/>
        <end position="125"/>
    </location>
</feature>
<feature type="transmembrane region" description="Helical; Name=Segment S5" evidence="2">
    <location>
        <begin position="126"/>
        <end position="146"/>
    </location>
</feature>
<feature type="topological domain" description="Extracellular" evidence="2">
    <location>
        <begin position="147"/>
        <end position="181"/>
    </location>
</feature>
<feature type="transmembrane region" description="Helical; Name=Segment S6" evidence="2">
    <location>
        <begin position="182"/>
        <end position="202"/>
    </location>
</feature>
<feature type="topological domain" description="Cytoplasmic" evidence="2">
    <location>
        <begin position="203"/>
        <end position="209"/>
    </location>
</feature>
<feature type="short sequence motif" description="Selectivity filter" evidence="1">
    <location>
        <begin position="170"/>
        <end position="175"/>
    </location>
</feature>
<name>MVP_METJA</name>
<accession>Q57603</accession>
<sequence length="209" mass="24183">MNLKDRRLKKIMEVLSLIFTFEIVASFILSTYNPPYQDLLIKLDYISIMFFTFEFIYNFYYVEDKAKFFKDIYNIVDAIVVIAFLLYSLQVFYSKAFLGLRVINLLRILVLLRIIKLRKLEENQALINFLTLLTICFIASCLIWIVESGVNPAINNFFDAFYFTTISITTVGYGDITPKTDAGKLIIIFSVLFFISGLITSLQKALKGD</sequence>
<organism>
    <name type="scientific">Methanocaldococcus jannaschii (strain ATCC 43067 / DSM 2661 / JAL-1 / JCM 10045 / NBRC 100440)</name>
    <name type="common">Methanococcus jannaschii</name>
    <dbReference type="NCBI Taxonomy" id="243232"/>
    <lineage>
        <taxon>Archaea</taxon>
        <taxon>Methanobacteriati</taxon>
        <taxon>Methanobacteriota</taxon>
        <taxon>Methanomada group</taxon>
        <taxon>Methanococci</taxon>
        <taxon>Methanococcales</taxon>
        <taxon>Methanocaldococcaceae</taxon>
        <taxon>Methanocaldococcus</taxon>
    </lineage>
</organism>
<protein>
    <recommendedName>
        <fullName>Hyperpolarization-activated voltage-gated potassium channel</fullName>
    </recommendedName>
    <alternativeName>
        <fullName>MVP</fullName>
    </alternativeName>
</protein>
<reference key="1">
    <citation type="journal article" date="2003" name="Nat. Neurosci.">
        <title>Hyperpolarization moves S4 sensors inward to open MVP, a methanococcal voltage-gated potassium channel.</title>
        <authorList>
            <person name="Sesti F."/>
            <person name="Rajan S."/>
            <person name="Gonzalez-Colaso R."/>
            <person name="Nikolaeva N."/>
            <person name="Goldstein S.A.N."/>
        </authorList>
    </citation>
    <scope>NUCLEOTIDE SEQUENCE [GENOMIC DNA]</scope>
    <scope>CHARACTERIZATION</scope>
</reference>
<reference key="2">
    <citation type="journal article" date="1996" name="Science">
        <title>Complete genome sequence of the methanogenic archaeon, Methanococcus jannaschii.</title>
        <authorList>
            <person name="Bult C.J."/>
            <person name="White O."/>
            <person name="Olsen G.J."/>
            <person name="Zhou L."/>
            <person name="Fleischmann R.D."/>
            <person name="Sutton G.G."/>
            <person name="Blake J.A."/>
            <person name="FitzGerald L.M."/>
            <person name="Clayton R.A."/>
            <person name="Gocayne J.D."/>
            <person name="Kerlavage A.R."/>
            <person name="Dougherty B.A."/>
            <person name="Tomb J.-F."/>
            <person name="Adams M.D."/>
            <person name="Reich C.I."/>
            <person name="Overbeek R."/>
            <person name="Kirkness E.F."/>
            <person name="Weinstock K.G."/>
            <person name="Merrick J.M."/>
            <person name="Glodek A."/>
            <person name="Scott J.L."/>
            <person name="Geoghagen N.S.M."/>
            <person name="Weidman J.F."/>
            <person name="Fuhrmann J.L."/>
            <person name="Nguyen D."/>
            <person name="Utterback T.R."/>
            <person name="Kelley J.M."/>
            <person name="Peterson J.D."/>
            <person name="Sadow P.W."/>
            <person name="Hanna M.C."/>
            <person name="Cotton M.D."/>
            <person name="Roberts K.M."/>
            <person name="Hurst M.A."/>
            <person name="Kaine B.P."/>
            <person name="Borodovsky M."/>
            <person name="Klenk H.-P."/>
            <person name="Fraser C.M."/>
            <person name="Smith H.O."/>
            <person name="Woese C.R."/>
            <person name="Venter J.C."/>
        </authorList>
    </citation>
    <scope>NUCLEOTIDE SEQUENCE [LARGE SCALE GENOMIC DNA]</scope>
    <source>
        <strain>ATCC 43067 / DSM 2661 / JAL-1 / JCM 10045 / NBRC 100440</strain>
    </source>
</reference>
<reference key="3">
    <citation type="journal article" date="2003" name="FEBS Lett.">
        <title>MjK1, a K+ channel from M. jannaschii, mediates K+ uptake and K+ sensitivity in E. coli.</title>
        <authorList>
            <person name="Hellmer J."/>
            <person name="Zeilinger C."/>
        </authorList>
    </citation>
    <scope>FUNCTION</scope>
    <source>
        <strain>ATCC 43067 / DSM 2661 / JAL-1 / JCM 10045 / NBRC 100440</strain>
    </source>
</reference>
<evidence type="ECO:0000250" key="1"/>
<evidence type="ECO:0000255" key="2"/>
<evidence type="ECO:0000269" key="3">
    <source>
    </source>
</evidence>
<evidence type="ECO:0000305" key="4"/>
<gene>
    <name type="primary">mvp</name>
    <name type="ordered locus">MJ0139</name>
</gene>
<dbReference type="EMBL" id="AY268105">
    <property type="protein sequence ID" value="AAP31055.1"/>
    <property type="molecule type" value="mRNA"/>
</dbReference>
<dbReference type="EMBL" id="L77117">
    <property type="protein sequence ID" value="AAB98122.1"/>
    <property type="molecule type" value="Genomic_DNA"/>
</dbReference>
<dbReference type="PIR" id="C64317">
    <property type="entry name" value="C64317"/>
</dbReference>
<dbReference type="RefSeq" id="WP_010869632.1">
    <property type="nucleotide sequence ID" value="NC_000909.1"/>
</dbReference>
<dbReference type="SMR" id="Q57603"/>
<dbReference type="STRING" id="243232.MJ_0139"/>
<dbReference type="TCDB" id="1.A.1.6.1">
    <property type="family name" value="the voltage-gated ion channel (vic) superfamily"/>
</dbReference>
<dbReference type="PaxDb" id="243232-MJ_0139"/>
<dbReference type="EnsemblBacteria" id="AAB98122">
    <property type="protein sequence ID" value="AAB98122"/>
    <property type="gene ID" value="MJ_0139"/>
</dbReference>
<dbReference type="GeneID" id="1450980"/>
<dbReference type="KEGG" id="mja:MJ_0139"/>
<dbReference type="eggNOG" id="arCOG01964">
    <property type="taxonomic scope" value="Archaea"/>
</dbReference>
<dbReference type="HOGENOM" id="CLU_1313152_0_0_2"/>
<dbReference type="InParanoid" id="Q57603"/>
<dbReference type="OrthoDB" id="56871at2157"/>
<dbReference type="Proteomes" id="UP000000805">
    <property type="component" value="Chromosome"/>
</dbReference>
<dbReference type="GO" id="GO:0008076">
    <property type="term" value="C:voltage-gated potassium channel complex"/>
    <property type="evidence" value="ECO:0007669"/>
    <property type="project" value="InterPro"/>
</dbReference>
<dbReference type="GO" id="GO:0005249">
    <property type="term" value="F:voltage-gated potassium channel activity"/>
    <property type="evidence" value="ECO:0007669"/>
    <property type="project" value="InterPro"/>
</dbReference>
<dbReference type="Gene3D" id="1.10.287.70">
    <property type="match status" value="1"/>
</dbReference>
<dbReference type="Gene3D" id="1.20.120.350">
    <property type="entry name" value="Voltage-gated potassium channels. Chain C"/>
    <property type="match status" value="1"/>
</dbReference>
<dbReference type="InterPro" id="IPR053681">
    <property type="entry name" value="Hyp-activated_K+_channel"/>
</dbReference>
<dbReference type="InterPro" id="IPR005821">
    <property type="entry name" value="Ion_trans_dom"/>
</dbReference>
<dbReference type="InterPro" id="IPR028325">
    <property type="entry name" value="VG_K_chnl"/>
</dbReference>
<dbReference type="InterPro" id="IPR027359">
    <property type="entry name" value="Volt_channel_dom_sf"/>
</dbReference>
<dbReference type="NCBIfam" id="NF040645">
    <property type="entry name" value="K_channel_Meth"/>
    <property type="match status" value="1"/>
</dbReference>
<dbReference type="PANTHER" id="PTHR11537:SF254">
    <property type="entry name" value="POTASSIUM VOLTAGE-GATED CHANNEL PROTEIN SHAB"/>
    <property type="match status" value="1"/>
</dbReference>
<dbReference type="PANTHER" id="PTHR11537">
    <property type="entry name" value="VOLTAGE-GATED POTASSIUM CHANNEL"/>
    <property type="match status" value="1"/>
</dbReference>
<dbReference type="Pfam" id="PF00520">
    <property type="entry name" value="Ion_trans"/>
    <property type="match status" value="1"/>
</dbReference>
<dbReference type="PRINTS" id="PR00169">
    <property type="entry name" value="KCHANNEL"/>
</dbReference>
<dbReference type="SUPFAM" id="SSF81324">
    <property type="entry name" value="Voltage-gated potassium channels"/>
    <property type="match status" value="1"/>
</dbReference>